<sequence>MSVTSREQKFSGKYSSYTAQDRQGLVNAVTCVLSSSSDPVAVSSDYSNSLSIAREVNAYAKIAGCDWTYYVQKLEVTIGRNTDSLNLNAVPGTVVKKNIDIDLGPAKIVSRKHAAIRFNLESGSWELQIFGRNGAKVNFRRIPTGPDSPPTVLQSGCIIDIGGVQMIFILPEQETIISDYCLNHLMPKLLSTYGTNGNNNPLLRNIIEGSTYLREQRLQEEARLQQLDHLHTPLSSSSDVNPIGDPHGDTIMMEEDEEDENYTRGGIRPNTYTSSSNNAVTNGNVPHIENPSDLSLDENRYIKPPQSYASMITQAILSTPEGSISLADIYKFISDNYAFYRFSQMAWQNSVRHNLSLNKAFEKVPKRAGQQGKGMNWKISDEVRRDFLNKWNAGKLSKIRRGASVTRQLQLHMSKFGEIPAPESSSIDPRGIKAQKVKKSLQATSSILGESAPQLQRTQLTGQISTTTSMDVTTNANVNNSSLS</sequence>
<proteinExistence type="evidence at protein level"/>
<feature type="chain" id="PRO_0000091903" description="Fork head protein homolog 1">
    <location>
        <begin position="1"/>
        <end position="484"/>
    </location>
</feature>
<feature type="domain" description="FHA" evidence="1">
    <location>
        <begin position="76"/>
        <end position="142"/>
    </location>
</feature>
<feature type="DNA-binding region" description="Fork-head" evidence="2">
    <location>
        <begin position="302"/>
        <end position="393"/>
    </location>
</feature>
<feature type="mutagenesis site" description="Leads to reduced colony size when FKH2 is deleted." evidence="19">
    <original>R</original>
    <variation>A</variation>
    <location>
        <position position="80"/>
    </location>
</feature>
<feature type="mutagenesis site" description="Leads to reduced colony size when FKH2 is deleted." evidence="19">
    <original>S</original>
    <variation>A</variation>
    <location>
        <position position="110"/>
    </location>
</feature>
<feature type="mutagenesis site" description="Leads to reduced colony size when FKH2 is deleted." evidence="19">
    <original>R</original>
    <variation>A</variation>
    <location>
        <position position="111"/>
    </location>
</feature>
<accession>P40466</accession>
<accession>D6VVF6</accession>
<accession>Q45U14</accession>
<name>FKH1_YEAST</name>
<gene>
    <name evidence="20" type="primary">FKH1</name>
    <name type="ordered locus">YIL131C</name>
</gene>
<evidence type="ECO:0000255" key="1">
    <source>
        <dbReference type="PROSITE-ProRule" id="PRU00086"/>
    </source>
</evidence>
<evidence type="ECO:0000255" key="2">
    <source>
        <dbReference type="PROSITE-ProRule" id="PRU00089"/>
    </source>
</evidence>
<evidence type="ECO:0000269" key="3">
    <source>
    </source>
</evidence>
<evidence type="ECO:0000269" key="4">
    <source>
    </source>
</evidence>
<evidence type="ECO:0000269" key="5">
    <source>
    </source>
</evidence>
<evidence type="ECO:0000269" key="6">
    <source>
    </source>
</evidence>
<evidence type="ECO:0000269" key="7">
    <source>
    </source>
</evidence>
<evidence type="ECO:0000269" key="8">
    <source>
    </source>
</evidence>
<evidence type="ECO:0000269" key="9">
    <source>
    </source>
</evidence>
<evidence type="ECO:0000269" key="10">
    <source>
    </source>
</evidence>
<evidence type="ECO:0000269" key="11">
    <source>
    </source>
</evidence>
<evidence type="ECO:0000269" key="12">
    <source>
    </source>
</evidence>
<evidence type="ECO:0000269" key="13">
    <source>
    </source>
</evidence>
<evidence type="ECO:0000269" key="14">
    <source>
    </source>
</evidence>
<evidence type="ECO:0000269" key="15">
    <source>
    </source>
</evidence>
<evidence type="ECO:0000269" key="16">
    <source>
    </source>
</evidence>
<evidence type="ECO:0000269" key="17">
    <source>
    </source>
</evidence>
<evidence type="ECO:0000269" key="18">
    <source>
    </source>
</evidence>
<evidence type="ECO:0000269" key="19">
    <source>
    </source>
</evidence>
<evidence type="ECO:0000303" key="20">
    <source>
    </source>
</evidence>
<reference key="1">
    <citation type="submission" date="1995-01" db="EMBL/GenBank/DDBJ databases">
        <title>Two fork head homologs in S. cerevisiae.</title>
        <authorList>
            <person name="Zhu G."/>
            <person name="Davis T.N."/>
        </authorList>
    </citation>
    <scope>NUCLEOTIDE SEQUENCE [GENOMIC DNA]</scope>
    <source>
        <strain>ATCC 204508 / S288c</strain>
    </source>
</reference>
<reference key="2">
    <citation type="journal article" date="2005" name="Nat. Genet.">
        <title>Quantitative trait loci mapped to single-nucleotide resolution in yeast.</title>
        <authorList>
            <person name="Deutschbauer A.M."/>
            <person name="Davis R.W."/>
        </authorList>
    </citation>
    <scope>NUCLEOTIDE SEQUENCE [GENOMIC DNA]</scope>
    <source>
        <strain>SK1</strain>
    </source>
</reference>
<reference key="3">
    <citation type="journal article" date="1997" name="Nature">
        <title>The nucleotide sequence of Saccharomyces cerevisiae chromosome IX.</title>
        <authorList>
            <person name="Churcher C.M."/>
            <person name="Bowman S."/>
            <person name="Badcock K."/>
            <person name="Bankier A.T."/>
            <person name="Brown D."/>
            <person name="Chillingworth T."/>
            <person name="Connor R."/>
            <person name="Devlin K."/>
            <person name="Gentles S."/>
            <person name="Hamlin N."/>
            <person name="Harris D.E."/>
            <person name="Horsnell T."/>
            <person name="Hunt S."/>
            <person name="Jagels K."/>
            <person name="Jones M."/>
            <person name="Lye G."/>
            <person name="Moule S."/>
            <person name="Odell C."/>
            <person name="Pearson D."/>
            <person name="Rajandream M.A."/>
            <person name="Rice P."/>
            <person name="Rowley N."/>
            <person name="Skelton J."/>
            <person name="Smith V."/>
            <person name="Walsh S.V."/>
            <person name="Whitehead S."/>
            <person name="Barrell B.G."/>
        </authorList>
    </citation>
    <scope>NUCLEOTIDE SEQUENCE [LARGE SCALE GENOMIC DNA]</scope>
    <source>
        <strain>ATCC 204508 / S288c</strain>
    </source>
</reference>
<reference key="4">
    <citation type="journal article" date="2014" name="G3 (Bethesda)">
        <title>The reference genome sequence of Saccharomyces cerevisiae: Then and now.</title>
        <authorList>
            <person name="Engel S.R."/>
            <person name="Dietrich F.S."/>
            <person name="Fisk D.G."/>
            <person name="Binkley G."/>
            <person name="Balakrishnan R."/>
            <person name="Costanzo M.C."/>
            <person name="Dwight S.S."/>
            <person name="Hitz B.C."/>
            <person name="Karra K."/>
            <person name="Nash R.S."/>
            <person name="Weng S."/>
            <person name="Wong E.D."/>
            <person name="Lloyd P."/>
            <person name="Skrzypek M.S."/>
            <person name="Miyasato S.R."/>
            <person name="Simison M."/>
            <person name="Cherry J.M."/>
        </authorList>
    </citation>
    <scope>GENOME REANNOTATION</scope>
    <source>
        <strain>ATCC 204508 / S288c</strain>
    </source>
</reference>
<reference key="5">
    <citation type="journal article" date="2000" name="Curr. Biol.">
        <title>Forkhead transcription factors, Fkh1p and Fkh2p, collaborate with Mcm1p to control transcription required for M-phase.</title>
        <authorList>
            <person name="Kumar R."/>
            <person name="Reynolds D.M."/>
            <person name="Shevchenko A."/>
            <person name="Shevchenko A."/>
            <person name="Goldstone S.D."/>
            <person name="Dalton S."/>
        </authorList>
    </citation>
    <scope>FUNCTION</scope>
    <scope>DISRUPTION PHENOTYPE</scope>
</reference>
<reference key="6">
    <citation type="journal article" date="2000" name="Genetics">
        <title>Forkhead genes in transcriptional silencing, cell morphology and the cell cycle. Overlapping and distinct functions for FKH1 and FKH2 in Saccharomyces cerevisiae.</title>
        <authorList>
            <person name="Hollenhorst P.C."/>
            <person name="Bose M.E."/>
            <person name="Mielke M.R."/>
            <person name="Mueller U."/>
            <person name="Fox C.A."/>
        </authorList>
    </citation>
    <scope>FUNCTION</scope>
    <scope>DISRUPTION PHENOTYPE</scope>
</reference>
<reference key="7">
    <citation type="journal article" date="2000" name="Nature">
        <title>Two yeast forkhead genes regulate the cell cycle and pseudohyphal growth.</title>
        <authorList>
            <person name="Zhu G."/>
            <person name="Spellman P.T."/>
            <person name="Volpe T."/>
            <person name="Brown P.O."/>
            <person name="Botstein D."/>
            <person name="Davis T.N."/>
            <person name="Futcher B."/>
        </authorList>
    </citation>
    <scope>FUNCTION</scope>
</reference>
<reference key="8">
    <citation type="journal article" date="2000" name="Nature">
        <title>Forkhead-like transcription factors recruit Ndd1 to the chromatin of G2/M-specific promoters.</title>
        <authorList>
            <person name="Koranda M."/>
            <person name="Schleiffer A."/>
            <person name="Endler L."/>
            <person name="Ammerer G."/>
        </authorList>
    </citation>
    <scope>FUNCTION</scope>
</reference>
<reference key="9">
    <citation type="journal article" date="2001" name="Genes Dev.">
        <title>Mechanisms controlling differential promoter-occupancy by the yeast forkhead proteins Fkh1p and Fkh2p: implications for regulating the cell cycle and differentiation.</title>
        <authorList>
            <person name="Hollenhorst P.C."/>
            <person name="Pietz G."/>
            <person name="Fox C.A."/>
        </authorList>
    </citation>
    <scope>FUNCTION</scope>
    <scope>DNA-BINDING</scope>
</reference>
<reference key="10">
    <citation type="journal article" date="2002" name="Genes Dev.">
        <title>Saccharomyces forkhead protein Fkh1 regulates donor preference during mating-type switching through the recombination enhancer.</title>
        <authorList>
            <person name="Sun K."/>
            <person name="Coic E."/>
            <person name="Zhou Z."/>
            <person name="Durrens P."/>
            <person name="Haber J.E."/>
        </authorList>
    </citation>
    <scope>FUNCTION</scope>
</reference>
<reference key="11">
    <citation type="journal article" date="2003" name="Nature">
        <title>Global analysis of protein expression in yeast.</title>
        <authorList>
            <person name="Ghaemmaghami S."/>
            <person name="Huh W.-K."/>
            <person name="Bower K."/>
            <person name="Howson R.W."/>
            <person name="Belle A."/>
            <person name="Dephoure N."/>
            <person name="O'Shea E.K."/>
            <person name="Weissman J.S."/>
        </authorList>
    </citation>
    <scope>LEVEL OF PROTEIN EXPRESSION [LARGE SCALE ANALYSIS]</scope>
</reference>
<reference key="12">
    <citation type="journal article" date="2003" name="Science">
        <title>Regulation of elongating RNA polymerase II by forkhead transcription factors in yeast.</title>
        <authorList>
            <person name="Morillon A."/>
            <person name="O'Sullivan J."/>
            <person name="Azad A."/>
            <person name="Proudfoot N."/>
            <person name="Mellor J."/>
        </authorList>
    </citation>
    <scope>FUNCTION</scope>
    <scope>DISRUPTION PHENOTYPE</scope>
</reference>
<reference key="13">
    <citation type="journal article" date="2006" name="Mol. Cell. Biol.">
        <title>Cell cycle-dependent regulation of Saccharomyces cerevisiae donor preference during mating-type switching by SBF (Swi4/Swi6) and Fkh1.</title>
        <authorList>
            <person name="Coic E."/>
            <person name="Sun K."/>
            <person name="Wu C."/>
            <person name="Haber J.E."/>
        </authorList>
    </citation>
    <scope>FUNCTION</scope>
</reference>
<reference key="14">
    <citation type="journal article" date="2007" name="Mol. Cell. Biol.">
        <title>The Isw2 chromatin-remodeling ATPase cooperates with the Fkh2 transcription factor to repress transcription of the B-type cyclin gene CLB2.</title>
        <authorList>
            <person name="Sherriff J.A."/>
            <person name="Kent N.A."/>
            <person name="Mellor J."/>
        </authorList>
    </citation>
    <scope>FUNCTION</scope>
</reference>
<reference key="15">
    <citation type="journal article" date="2012" name="Cell">
        <title>Forkhead transcription factors establish origin timing and long-range clustering in S. cerevisiae.</title>
        <authorList>
            <person name="Knott S.R."/>
            <person name="Peace J.M."/>
            <person name="Ostrow A.Z."/>
            <person name="Gan Y."/>
            <person name="Rex A.E."/>
            <person name="Viggiani C.J."/>
            <person name="Tavare S."/>
            <person name="Aparicio O.M."/>
        </authorList>
    </citation>
    <scope>FUNCTION</scope>
    <scope>INTERACTION WITH ORC</scope>
</reference>
<reference key="16">
    <citation type="journal article" date="2012" name="Cell Biosci.">
        <title>The nuclear localization of SWI/SNF proteins is subjected to oxygen regulation.</title>
        <authorList>
            <person name="Dastidar R.G."/>
            <person name="Hooda J."/>
            <person name="Shah A."/>
            <person name="Cao T.M."/>
            <person name="Henke R.M."/>
            <person name="Zhang L."/>
        </authorList>
    </citation>
    <scope>SUBCELLULAR LOCATION</scope>
</reference>
<reference key="17">
    <citation type="journal article" date="2012" name="PLoS Genet.">
        <title>The yeast forkhead transcription factors fkh1 and fkh2 regulate lifespan and stress response together with the anaphase-promoting complex.</title>
        <authorList>
            <person name="Postnikoff S.D."/>
            <person name="Malo M.E."/>
            <person name="Wong B."/>
            <person name="Harkness T.A."/>
        </authorList>
    </citation>
    <scope>FUNCTION</scope>
</reference>
<reference key="18">
    <citation type="journal article" date="2012" name="PLoS Genet.">
        <title>Regulation of budding yeast mating-type switching donor preference by the FHA domain of Fkh1.</title>
        <authorList>
            <person name="Li J."/>
            <person name="Coic E."/>
            <person name="Lee K."/>
            <person name="Lee C.S."/>
            <person name="Kim J.A."/>
            <person name="Wu Q."/>
            <person name="Haber J.E."/>
        </authorList>
    </citation>
    <scope>FUNCTION</scope>
    <scope>DOMAIN</scope>
</reference>
<reference key="19">
    <citation type="journal article" date="2014" name="PLoS ONE">
        <title>Fkh1 and Fkh2 bind multiple chromosomal elements in the S. cerevisiae genome with distinct specificities and cell cycle dynamics.</title>
        <authorList>
            <person name="Ostrow A.Z."/>
            <person name="Nellimoottil T."/>
            <person name="Knott S.R."/>
            <person name="Fox C.A."/>
            <person name="Tavare S."/>
            <person name="Aparicio O.M."/>
        </authorList>
    </citation>
    <scope>FUNCTION</scope>
    <scope>DNA-BINDING</scope>
</reference>
<reference key="20">
    <citation type="journal article" date="2016" name="Genome Res.">
        <title>Quantitative BrdU immunoprecipitation method demonstrates that Fkh1 and Fkh2 are rate-limiting activators of replication origins that reprogram replication timing in G1 phase.</title>
        <authorList>
            <person name="Peace J.M."/>
            <person name="Villwock S.K."/>
            <person name="Zeytounian J.L."/>
            <person name="Gan Y."/>
            <person name="Aparicio O.M."/>
        </authorList>
    </citation>
    <scope>FUNCTION</scope>
</reference>
<reference key="21">
    <citation type="journal article" date="2016" name="PLoS Genet.">
        <title>Binding of the Fkh1 forkhead associated domain to a phosphopeptide within the Mph1 DNA helicase regulates mating-type switching in budding yeast.</title>
        <authorList>
            <person name="Dummer A.M."/>
            <person name="Su Z."/>
            <person name="Cherney R."/>
            <person name="Choi K."/>
            <person name="Denu J."/>
            <person name="Zhao X."/>
            <person name="Fox C.A."/>
        </authorList>
    </citation>
    <scope>FUNCTION</scope>
    <scope>INTERACTION WITH ECM30; GLN3; URE2; MPH1 AND FDO1</scope>
    <scope>MUTAGENESIS OF ARG-80; SER-110 AND ARG-111</scope>
</reference>
<comment type="function">
    <text evidence="3 4 5 6 7 8 9 11 12 13 14 15 17 18 19">Transcription factor that regulates the expression of the CLB2 cluster of genes during the G2/M phase of the mitotic cell cycle (PubMed:10894548, PubMed:10894549, PubMed:10959837, PubMed:11562353, PubMed:12702877, PubMed:17283050, PubMed:24504085). The CLB2 cluster of genes includes mitotic regulators such as CLB1, CLB2, CDC5 and CDC20 as well as SWI5 and ACE2, transcription factors required for the subsequent temporal wave of cell cycle regulated gene expression in the M/G1 phase interval (PubMed:10894548, PubMed:10959837, PubMed:11562353). Involved in HMRa silencing (PubMed:10747051). FKH1 and FKH2 associate with the coding regions of active genes and influence, in opposing ways, transcriptional elongation and termination, and coordinate early transcription elongation and pre-mRNA processing (PubMed:12702877). Both FKH1 and FKH2 play a role as regulators of lifespan in collaboration with the anaphase-promoting complex (APC), likely through combined regulation of stress response, genomic stability, and cell cycle regulation (PubMed:22438832). FKH1 and FKH2 function also in controlling yeast cell morphology by preventing preudohyphal growth (PubMed:10747051, PubMed:10894548). Acts as a rate-limiting replication origin activator via its interaction with the origin recognition complex (ORC) (PubMed:22265405, PubMed:26728715). Plays a transcription-independent role in recombination donor preference during mating-type switching through binding to the recombination enhancer (RE), a 700-bp cis-acting element that controls recombination along the left arm of chromosome III (PubMed:12183363, PubMed:16809780, PubMed:22496671, PubMed:27257873).</text>
</comment>
<comment type="subunit">
    <text evidence="13 19">Interacts (via FHA domain) with ECM30, GLN3, URE2, MPH1 AND FDO1 (PubMed:27257873). Interacts with the origin recognition complex (ORC) composed of ORC1 to ORC6 (PubMed:22265405).</text>
</comment>
<comment type="subcellular location">
    <subcellularLocation>
        <location evidence="16">Nucleus</location>
    </subcellularLocation>
    <subcellularLocation>
        <location evidence="9">Cytoplasm</location>
        <location evidence="9">Cytosol</location>
    </subcellularLocation>
    <text evidence="9">Relocalizes to the cytosol in response to hypoxia.</text>
</comment>
<comment type="domain">
    <text evidence="15">The phosphothreonine-binding FHA domain is required for the interaction with MPH1 and controlling recombination donor preference during mating-type switching.</text>
</comment>
<comment type="disruption phenotype">
    <text evidence="3 6 9">Causes only a modest decline in CLB2 cluster genes expression, but this expression is abolished when both FKH1 and FKH2 are deleted (PubMed:10959837). Leads to a defect in silencing HMRa (PubMed:10747051). Causes a form of yeast pseudohyphal growth, when FKH2 is also deleted (PubMed:10747051). Affects cell-cycle progression and CLB2 mRNA expression (PubMed:10747051). Leads to defect in pre-mRNA 3' end formation during transcription of targeted genes (PubMed:12702877).</text>
</comment>
<comment type="miscellaneous">
    <text evidence="10">Present with 1720 molecules/cell in log phase SD medium.</text>
</comment>
<protein>
    <recommendedName>
        <fullName evidence="20">Fork head protein homolog 1</fullName>
    </recommendedName>
</protein>
<keyword id="KW-0963">Cytoplasm</keyword>
<keyword id="KW-0238">DNA-binding</keyword>
<keyword id="KW-0539">Nucleus</keyword>
<keyword id="KW-1185">Reference proteome</keyword>
<keyword id="KW-0804">Transcription</keyword>
<keyword id="KW-0805">Transcription regulation</keyword>
<organism>
    <name type="scientific">Saccharomyces cerevisiae (strain ATCC 204508 / S288c)</name>
    <name type="common">Baker's yeast</name>
    <dbReference type="NCBI Taxonomy" id="559292"/>
    <lineage>
        <taxon>Eukaryota</taxon>
        <taxon>Fungi</taxon>
        <taxon>Dikarya</taxon>
        <taxon>Ascomycota</taxon>
        <taxon>Saccharomycotina</taxon>
        <taxon>Saccharomycetes</taxon>
        <taxon>Saccharomycetales</taxon>
        <taxon>Saccharomycetaceae</taxon>
        <taxon>Saccharomyces</taxon>
    </lineage>
</organism>
<dbReference type="EMBL" id="L38848">
    <property type="protein sequence ID" value="AAA60938.1"/>
    <property type="molecule type" value="Genomic_DNA"/>
</dbReference>
<dbReference type="EMBL" id="DQ115392">
    <property type="protein sequence ID" value="AAZ22496.1"/>
    <property type="molecule type" value="Genomic_DNA"/>
</dbReference>
<dbReference type="EMBL" id="Z38059">
    <property type="protein sequence ID" value="CAA86147.1"/>
    <property type="molecule type" value="Genomic_DNA"/>
</dbReference>
<dbReference type="EMBL" id="BK006942">
    <property type="protein sequence ID" value="DAA08422.1"/>
    <property type="molecule type" value="Genomic_DNA"/>
</dbReference>
<dbReference type="PIR" id="S48403">
    <property type="entry name" value="S48403"/>
</dbReference>
<dbReference type="RefSeq" id="NP_012135.1">
    <property type="nucleotide sequence ID" value="NM_001179479.1"/>
</dbReference>
<dbReference type="SMR" id="P40466"/>
<dbReference type="BioGRID" id="34860">
    <property type="interactions" value="138"/>
</dbReference>
<dbReference type="DIP" id="DIP-5220N"/>
<dbReference type="FunCoup" id="P40466">
    <property type="interactions" value="2466"/>
</dbReference>
<dbReference type="IntAct" id="P40466">
    <property type="interactions" value="35"/>
</dbReference>
<dbReference type="STRING" id="4932.YIL131C"/>
<dbReference type="iPTMnet" id="P40466"/>
<dbReference type="PaxDb" id="4932-YIL131C"/>
<dbReference type="PeptideAtlas" id="P40466"/>
<dbReference type="EnsemblFungi" id="YIL131C_mRNA">
    <property type="protein sequence ID" value="YIL131C"/>
    <property type="gene ID" value="YIL131C"/>
</dbReference>
<dbReference type="GeneID" id="854675"/>
<dbReference type="KEGG" id="sce:YIL131C"/>
<dbReference type="AGR" id="SGD:S000001393"/>
<dbReference type="SGD" id="S000001393">
    <property type="gene designation" value="FKH1"/>
</dbReference>
<dbReference type="VEuPathDB" id="FungiDB:YIL131C"/>
<dbReference type="eggNOG" id="KOG2294">
    <property type="taxonomic scope" value="Eukaryota"/>
</dbReference>
<dbReference type="GeneTree" id="ENSGT00940000173882"/>
<dbReference type="HOGENOM" id="CLU_044386_0_0_1"/>
<dbReference type="InParanoid" id="P40466"/>
<dbReference type="OMA" id="TIMMEED"/>
<dbReference type="OrthoDB" id="5954824at2759"/>
<dbReference type="BioCyc" id="YEAST:G3O-31382-MONOMER"/>
<dbReference type="Reactome" id="R-SCE-3232118">
    <property type="pathway name" value="SUMOylation of transcription factors"/>
</dbReference>
<dbReference type="Reactome" id="R-SCE-9018519">
    <property type="pathway name" value="Estrogen-dependent gene expression"/>
</dbReference>
<dbReference type="BioGRID-ORCS" id="854675">
    <property type="hits" value="2 hits in 13 CRISPR screens"/>
</dbReference>
<dbReference type="PRO" id="PR:P40466"/>
<dbReference type="Proteomes" id="UP000002311">
    <property type="component" value="Chromosome IX"/>
</dbReference>
<dbReference type="RNAct" id="P40466">
    <property type="molecule type" value="protein"/>
</dbReference>
<dbReference type="GO" id="GO:0005829">
    <property type="term" value="C:cytosol"/>
    <property type="evidence" value="ECO:0000314"/>
    <property type="project" value="SGD"/>
</dbReference>
<dbReference type="GO" id="GO:0005634">
    <property type="term" value="C:nucleus"/>
    <property type="evidence" value="ECO:0000314"/>
    <property type="project" value="SGD"/>
</dbReference>
<dbReference type="GO" id="GO:0019237">
    <property type="term" value="F:centromeric DNA binding"/>
    <property type="evidence" value="ECO:0000314"/>
    <property type="project" value="SGD"/>
</dbReference>
<dbReference type="GO" id="GO:0003682">
    <property type="term" value="F:chromatin binding"/>
    <property type="evidence" value="ECO:0000314"/>
    <property type="project" value="SGD"/>
</dbReference>
<dbReference type="GO" id="GO:0003688">
    <property type="term" value="F:DNA replication origin binding"/>
    <property type="evidence" value="ECO:0000314"/>
    <property type="project" value="SGD"/>
</dbReference>
<dbReference type="GO" id="GO:0001228">
    <property type="term" value="F:DNA-binding transcription activator activity, RNA polymerase II-specific"/>
    <property type="evidence" value="ECO:0000314"/>
    <property type="project" value="SGD"/>
</dbReference>
<dbReference type="GO" id="GO:0000981">
    <property type="term" value="F:DNA-binding transcription factor activity, RNA polymerase II-specific"/>
    <property type="evidence" value="ECO:0000318"/>
    <property type="project" value="GO_Central"/>
</dbReference>
<dbReference type="GO" id="GO:0001227">
    <property type="term" value="F:DNA-binding transcription repressor activity, RNA polymerase II-specific"/>
    <property type="evidence" value="ECO:0000314"/>
    <property type="project" value="SGD"/>
</dbReference>
<dbReference type="GO" id="GO:0000978">
    <property type="term" value="F:RNA polymerase II cis-regulatory region sequence-specific DNA binding"/>
    <property type="evidence" value="ECO:0000314"/>
    <property type="project" value="SGD"/>
</dbReference>
<dbReference type="GO" id="GO:0043565">
    <property type="term" value="F:sequence-specific DNA binding"/>
    <property type="evidence" value="ECO:0000314"/>
    <property type="project" value="SGD"/>
</dbReference>
<dbReference type="GO" id="GO:0006338">
    <property type="term" value="P:chromatin remodeling"/>
    <property type="evidence" value="ECO:0000315"/>
    <property type="project" value="SGD"/>
</dbReference>
<dbReference type="GO" id="GO:0007535">
    <property type="term" value="P:donor selection"/>
    <property type="evidence" value="ECO:0000315"/>
    <property type="project" value="SGD"/>
</dbReference>
<dbReference type="GO" id="GO:0000082">
    <property type="term" value="P:G1/S transition of mitotic cell cycle"/>
    <property type="evidence" value="ECO:0000316"/>
    <property type="project" value="SGD"/>
</dbReference>
<dbReference type="GO" id="GO:0000086">
    <property type="term" value="P:G2/M transition of mitotic cell cycle"/>
    <property type="evidence" value="ECO:0000315"/>
    <property type="project" value="SGD"/>
</dbReference>
<dbReference type="GO" id="GO:0031124">
    <property type="term" value="P:mRNA 3'-end processing"/>
    <property type="evidence" value="ECO:0000315"/>
    <property type="project" value="SGD"/>
</dbReference>
<dbReference type="GO" id="GO:2000221">
    <property type="term" value="P:negative regulation of pseudohyphal growth"/>
    <property type="evidence" value="ECO:0000316"/>
    <property type="project" value="SGD"/>
</dbReference>
<dbReference type="GO" id="GO:0000122">
    <property type="term" value="P:negative regulation of transcription by RNA polymerase II"/>
    <property type="evidence" value="ECO:0000315"/>
    <property type="project" value="SGD"/>
</dbReference>
<dbReference type="GO" id="GO:0034244">
    <property type="term" value="P:negative regulation of transcription elongation by RNA polymerase II"/>
    <property type="evidence" value="ECO:0000315"/>
    <property type="project" value="SGD"/>
</dbReference>
<dbReference type="GO" id="GO:1903468">
    <property type="term" value="P:positive regulation of DNA replication initiation"/>
    <property type="evidence" value="ECO:0000315"/>
    <property type="project" value="SGD"/>
</dbReference>
<dbReference type="GO" id="GO:0032298">
    <property type="term" value="P:positive regulation of DNA-templated DNA replication initiation"/>
    <property type="evidence" value="ECO:0000315"/>
    <property type="project" value="SGD"/>
</dbReference>
<dbReference type="GO" id="GO:0090055">
    <property type="term" value="P:positive regulation of silent mating-type cassette heterochromatin formation"/>
    <property type="evidence" value="ECO:0000315"/>
    <property type="project" value="SGD"/>
</dbReference>
<dbReference type="GO" id="GO:0045944">
    <property type="term" value="P:positive regulation of transcription by RNA polymerase II"/>
    <property type="evidence" value="ECO:0000316"/>
    <property type="project" value="SGD"/>
</dbReference>
<dbReference type="GO" id="GO:0006357">
    <property type="term" value="P:regulation of transcription by RNA polymerase II"/>
    <property type="evidence" value="ECO:0000318"/>
    <property type="project" value="GO_Central"/>
</dbReference>
<dbReference type="GO" id="GO:0006369">
    <property type="term" value="P:termination of RNA polymerase II transcription"/>
    <property type="evidence" value="ECO:0000315"/>
    <property type="project" value="SGD"/>
</dbReference>
<dbReference type="CDD" id="cd00059">
    <property type="entry name" value="FH_FOX"/>
    <property type="match status" value="1"/>
</dbReference>
<dbReference type="CDD" id="cd22701">
    <property type="entry name" value="FHA_FKH1-like"/>
    <property type="match status" value="1"/>
</dbReference>
<dbReference type="FunFam" id="2.60.200.20:FF:000045">
    <property type="entry name" value="Forkhead protein"/>
    <property type="match status" value="1"/>
</dbReference>
<dbReference type="Gene3D" id="2.60.200.20">
    <property type="match status" value="1"/>
</dbReference>
<dbReference type="Gene3D" id="1.10.10.10">
    <property type="entry name" value="Winged helix-like DNA-binding domain superfamily/Winged helix DNA-binding domain"/>
    <property type="match status" value="1"/>
</dbReference>
<dbReference type="InterPro" id="IPR000253">
    <property type="entry name" value="FHA_dom"/>
</dbReference>
<dbReference type="InterPro" id="IPR001766">
    <property type="entry name" value="Fork_head_dom"/>
</dbReference>
<dbReference type="InterPro" id="IPR008984">
    <property type="entry name" value="SMAD_FHA_dom_sf"/>
</dbReference>
<dbReference type="InterPro" id="IPR018122">
    <property type="entry name" value="TF_fork_head_CS_1"/>
</dbReference>
<dbReference type="InterPro" id="IPR030456">
    <property type="entry name" value="TF_fork_head_CS_2"/>
</dbReference>
<dbReference type="InterPro" id="IPR036388">
    <property type="entry name" value="WH-like_DNA-bd_sf"/>
</dbReference>
<dbReference type="InterPro" id="IPR036390">
    <property type="entry name" value="WH_DNA-bd_sf"/>
</dbReference>
<dbReference type="PANTHER" id="PTHR45881">
    <property type="entry name" value="CHECKPOINT SUPPRESSOR 1-LIKE, ISOFORM A-RELATED"/>
    <property type="match status" value="1"/>
</dbReference>
<dbReference type="PANTHER" id="PTHR45881:SF1">
    <property type="entry name" value="FORK HEAD PROTEIN HOMOLOG 2"/>
    <property type="match status" value="1"/>
</dbReference>
<dbReference type="Pfam" id="PF00498">
    <property type="entry name" value="FHA"/>
    <property type="match status" value="1"/>
</dbReference>
<dbReference type="Pfam" id="PF00250">
    <property type="entry name" value="Forkhead"/>
    <property type="match status" value="1"/>
</dbReference>
<dbReference type="PRINTS" id="PR00053">
    <property type="entry name" value="FORKHEAD"/>
</dbReference>
<dbReference type="SMART" id="SM00339">
    <property type="entry name" value="FH"/>
    <property type="match status" value="1"/>
</dbReference>
<dbReference type="SMART" id="SM00240">
    <property type="entry name" value="FHA"/>
    <property type="match status" value="1"/>
</dbReference>
<dbReference type="SUPFAM" id="SSF49879">
    <property type="entry name" value="SMAD/FHA domain"/>
    <property type="match status" value="1"/>
</dbReference>
<dbReference type="SUPFAM" id="SSF46785">
    <property type="entry name" value="Winged helix' DNA-binding domain"/>
    <property type="match status" value="1"/>
</dbReference>
<dbReference type="PROSITE" id="PS50006">
    <property type="entry name" value="FHA_DOMAIN"/>
    <property type="match status" value="1"/>
</dbReference>
<dbReference type="PROSITE" id="PS00657">
    <property type="entry name" value="FORK_HEAD_1"/>
    <property type="match status" value="1"/>
</dbReference>
<dbReference type="PROSITE" id="PS00658">
    <property type="entry name" value="FORK_HEAD_2"/>
    <property type="match status" value="1"/>
</dbReference>
<dbReference type="PROSITE" id="PS50039">
    <property type="entry name" value="FORK_HEAD_3"/>
    <property type="match status" value="1"/>
</dbReference>